<comment type="function">
    <text evidence="1">Catalyzes the radical-mediated insertion of two sulfur atoms into the C-6 and C-8 positions of the octanoyl moiety bound to the lipoyl domains of lipoate-dependent enzymes, thereby converting the octanoylated domains into lipoylated derivatives.</text>
</comment>
<comment type="catalytic activity">
    <reaction evidence="1">
        <text>[[Fe-S] cluster scaffold protein carrying a second [4Fe-4S](2+) cluster] + N(6)-octanoyl-L-lysyl-[protein] + 2 oxidized [2Fe-2S]-[ferredoxin] + 2 S-adenosyl-L-methionine + 4 H(+) = [[Fe-S] cluster scaffold protein] + N(6)-[(R)-dihydrolipoyl]-L-lysyl-[protein] + 4 Fe(3+) + 2 hydrogen sulfide + 2 5'-deoxyadenosine + 2 L-methionine + 2 reduced [2Fe-2S]-[ferredoxin]</text>
        <dbReference type="Rhea" id="RHEA:16585"/>
        <dbReference type="Rhea" id="RHEA-COMP:9928"/>
        <dbReference type="Rhea" id="RHEA-COMP:10000"/>
        <dbReference type="Rhea" id="RHEA-COMP:10001"/>
        <dbReference type="Rhea" id="RHEA-COMP:10475"/>
        <dbReference type="Rhea" id="RHEA-COMP:14568"/>
        <dbReference type="Rhea" id="RHEA-COMP:14569"/>
        <dbReference type="ChEBI" id="CHEBI:15378"/>
        <dbReference type="ChEBI" id="CHEBI:17319"/>
        <dbReference type="ChEBI" id="CHEBI:29034"/>
        <dbReference type="ChEBI" id="CHEBI:29919"/>
        <dbReference type="ChEBI" id="CHEBI:33722"/>
        <dbReference type="ChEBI" id="CHEBI:33737"/>
        <dbReference type="ChEBI" id="CHEBI:33738"/>
        <dbReference type="ChEBI" id="CHEBI:57844"/>
        <dbReference type="ChEBI" id="CHEBI:59789"/>
        <dbReference type="ChEBI" id="CHEBI:78809"/>
        <dbReference type="ChEBI" id="CHEBI:83100"/>
        <dbReference type="EC" id="2.8.1.8"/>
    </reaction>
</comment>
<comment type="cofactor">
    <cofactor evidence="1">
        <name>[4Fe-4S] cluster</name>
        <dbReference type="ChEBI" id="CHEBI:49883"/>
    </cofactor>
    <text evidence="1">Binds 2 [4Fe-4S] clusters per subunit. One cluster is coordinated with 3 cysteines and an exchangeable S-adenosyl-L-methionine.</text>
</comment>
<comment type="pathway">
    <text evidence="1">Protein modification; protein lipoylation via endogenous pathway; protein N(6)-(lipoyl)lysine from octanoyl-[acyl-carrier-protein]: step 2/2.</text>
</comment>
<comment type="subcellular location">
    <subcellularLocation>
        <location evidence="1">Cytoplasm</location>
    </subcellularLocation>
</comment>
<comment type="similarity">
    <text evidence="1">Belongs to the radical SAM superfamily. Lipoyl synthase family.</text>
</comment>
<organism>
    <name type="scientific">Dechloromonas aromatica (strain RCB)</name>
    <dbReference type="NCBI Taxonomy" id="159087"/>
    <lineage>
        <taxon>Bacteria</taxon>
        <taxon>Pseudomonadati</taxon>
        <taxon>Pseudomonadota</taxon>
        <taxon>Betaproteobacteria</taxon>
        <taxon>Rhodocyclales</taxon>
        <taxon>Azonexaceae</taxon>
        <taxon>Dechloromonas</taxon>
    </lineage>
</organism>
<protein>
    <recommendedName>
        <fullName evidence="1">Lipoyl synthase</fullName>
        <ecNumber evidence="1">2.8.1.8</ecNumber>
    </recommendedName>
    <alternativeName>
        <fullName evidence="1">Lip-syn</fullName>
        <shortName evidence="1">LS</shortName>
    </alternativeName>
    <alternativeName>
        <fullName evidence="1">Lipoate synthase</fullName>
    </alternativeName>
    <alternativeName>
        <fullName evidence="1">Lipoic acid synthase</fullName>
    </alternativeName>
    <alternativeName>
        <fullName evidence="1">Sulfur insertion protein LipA</fullName>
    </alternativeName>
</protein>
<gene>
    <name evidence="1" type="primary">lipA</name>
    <name type="ordered locus">Daro_0287</name>
</gene>
<sequence length="314" mass="34628">MAEKGVKQKGELKTARIPIKIVPVDTPLRKPEWIRVKAGNSAGRFGEIKSMLREKKLHTVCEEAACPNIGECFGRGTATFMILGDICTRRCPFCDVGHGQPLPPNPNEPAELADSVSSLKLQYVVITSVDRDDLRDGGAQHFVDVVRAVREASPKTTIETLVPDFRGRMDIAIDILGNGLPDVLNHNMETVPRLYKQARPGADYAHSLALMKQFKARYPDVKTKSGLMVGLGETDEEILEVMRDLRANDVEMLTIGQYLAPSGHHLPVSRYVHPDTFKMFEEEAKKMGFSGAACAPMVRSSYWADQQAHSAGVA</sequence>
<dbReference type="EC" id="2.8.1.8" evidence="1"/>
<dbReference type="EMBL" id="CP000089">
    <property type="protein sequence ID" value="AAZ45046.1"/>
    <property type="molecule type" value="Genomic_DNA"/>
</dbReference>
<dbReference type="SMR" id="Q47JD5"/>
<dbReference type="STRING" id="159087.Daro_0287"/>
<dbReference type="KEGG" id="dar:Daro_0287"/>
<dbReference type="eggNOG" id="COG0320">
    <property type="taxonomic scope" value="Bacteria"/>
</dbReference>
<dbReference type="HOGENOM" id="CLU_033144_2_1_4"/>
<dbReference type="OrthoDB" id="9787898at2"/>
<dbReference type="UniPathway" id="UPA00538">
    <property type="reaction ID" value="UER00593"/>
</dbReference>
<dbReference type="GO" id="GO:0005737">
    <property type="term" value="C:cytoplasm"/>
    <property type="evidence" value="ECO:0007669"/>
    <property type="project" value="UniProtKB-SubCell"/>
</dbReference>
<dbReference type="GO" id="GO:0051539">
    <property type="term" value="F:4 iron, 4 sulfur cluster binding"/>
    <property type="evidence" value="ECO:0007669"/>
    <property type="project" value="UniProtKB-UniRule"/>
</dbReference>
<dbReference type="GO" id="GO:0016992">
    <property type="term" value="F:lipoate synthase activity"/>
    <property type="evidence" value="ECO:0007669"/>
    <property type="project" value="UniProtKB-UniRule"/>
</dbReference>
<dbReference type="GO" id="GO:0046872">
    <property type="term" value="F:metal ion binding"/>
    <property type="evidence" value="ECO:0007669"/>
    <property type="project" value="UniProtKB-KW"/>
</dbReference>
<dbReference type="CDD" id="cd01335">
    <property type="entry name" value="Radical_SAM"/>
    <property type="match status" value="1"/>
</dbReference>
<dbReference type="FunFam" id="3.20.20.70:FF:000040">
    <property type="entry name" value="Lipoyl synthase"/>
    <property type="match status" value="1"/>
</dbReference>
<dbReference type="Gene3D" id="3.20.20.70">
    <property type="entry name" value="Aldolase class I"/>
    <property type="match status" value="1"/>
</dbReference>
<dbReference type="HAMAP" id="MF_00206">
    <property type="entry name" value="Lipoyl_synth"/>
    <property type="match status" value="1"/>
</dbReference>
<dbReference type="InterPro" id="IPR013785">
    <property type="entry name" value="Aldolase_TIM"/>
</dbReference>
<dbReference type="InterPro" id="IPR006638">
    <property type="entry name" value="Elp3/MiaA/NifB-like_rSAM"/>
</dbReference>
<dbReference type="InterPro" id="IPR003698">
    <property type="entry name" value="Lipoyl_synth"/>
</dbReference>
<dbReference type="InterPro" id="IPR007197">
    <property type="entry name" value="rSAM"/>
</dbReference>
<dbReference type="NCBIfam" id="TIGR00510">
    <property type="entry name" value="lipA"/>
    <property type="match status" value="1"/>
</dbReference>
<dbReference type="NCBIfam" id="NF004019">
    <property type="entry name" value="PRK05481.1"/>
    <property type="match status" value="1"/>
</dbReference>
<dbReference type="NCBIfam" id="NF009544">
    <property type="entry name" value="PRK12928.1"/>
    <property type="match status" value="1"/>
</dbReference>
<dbReference type="PANTHER" id="PTHR10949">
    <property type="entry name" value="LIPOYL SYNTHASE"/>
    <property type="match status" value="1"/>
</dbReference>
<dbReference type="PANTHER" id="PTHR10949:SF0">
    <property type="entry name" value="LIPOYL SYNTHASE, MITOCHONDRIAL"/>
    <property type="match status" value="1"/>
</dbReference>
<dbReference type="Pfam" id="PF04055">
    <property type="entry name" value="Radical_SAM"/>
    <property type="match status" value="1"/>
</dbReference>
<dbReference type="PIRSF" id="PIRSF005963">
    <property type="entry name" value="Lipoyl_synth"/>
    <property type="match status" value="1"/>
</dbReference>
<dbReference type="SFLD" id="SFLDF00271">
    <property type="entry name" value="lipoyl_synthase"/>
    <property type="match status" value="1"/>
</dbReference>
<dbReference type="SFLD" id="SFLDS00029">
    <property type="entry name" value="Radical_SAM"/>
    <property type="match status" value="1"/>
</dbReference>
<dbReference type="SMART" id="SM00729">
    <property type="entry name" value="Elp3"/>
    <property type="match status" value="1"/>
</dbReference>
<dbReference type="SUPFAM" id="SSF102114">
    <property type="entry name" value="Radical SAM enzymes"/>
    <property type="match status" value="1"/>
</dbReference>
<dbReference type="PROSITE" id="PS51918">
    <property type="entry name" value="RADICAL_SAM"/>
    <property type="match status" value="1"/>
</dbReference>
<proteinExistence type="inferred from homology"/>
<name>LIPA_DECAR</name>
<keyword id="KW-0004">4Fe-4S</keyword>
<keyword id="KW-0963">Cytoplasm</keyword>
<keyword id="KW-0408">Iron</keyword>
<keyword id="KW-0411">Iron-sulfur</keyword>
<keyword id="KW-0479">Metal-binding</keyword>
<keyword id="KW-0949">S-adenosyl-L-methionine</keyword>
<keyword id="KW-0808">Transferase</keyword>
<feature type="chain" id="PRO_0000325242" description="Lipoyl synthase">
    <location>
        <begin position="1"/>
        <end position="314"/>
    </location>
</feature>
<feature type="domain" description="Radical SAM core" evidence="2">
    <location>
        <begin position="73"/>
        <end position="290"/>
    </location>
</feature>
<feature type="binding site" evidence="1">
    <location>
        <position position="61"/>
    </location>
    <ligand>
        <name>[4Fe-4S] cluster</name>
        <dbReference type="ChEBI" id="CHEBI:49883"/>
        <label>1</label>
    </ligand>
</feature>
<feature type="binding site" evidence="1">
    <location>
        <position position="66"/>
    </location>
    <ligand>
        <name>[4Fe-4S] cluster</name>
        <dbReference type="ChEBI" id="CHEBI:49883"/>
        <label>1</label>
    </ligand>
</feature>
<feature type="binding site" evidence="1">
    <location>
        <position position="72"/>
    </location>
    <ligand>
        <name>[4Fe-4S] cluster</name>
        <dbReference type="ChEBI" id="CHEBI:49883"/>
        <label>1</label>
    </ligand>
</feature>
<feature type="binding site" evidence="1">
    <location>
        <position position="87"/>
    </location>
    <ligand>
        <name>[4Fe-4S] cluster</name>
        <dbReference type="ChEBI" id="CHEBI:49883"/>
        <label>2</label>
        <note>4Fe-4S-S-AdoMet</note>
    </ligand>
</feature>
<feature type="binding site" evidence="1">
    <location>
        <position position="91"/>
    </location>
    <ligand>
        <name>[4Fe-4S] cluster</name>
        <dbReference type="ChEBI" id="CHEBI:49883"/>
        <label>2</label>
        <note>4Fe-4S-S-AdoMet</note>
    </ligand>
</feature>
<feature type="binding site" evidence="1">
    <location>
        <position position="94"/>
    </location>
    <ligand>
        <name>[4Fe-4S] cluster</name>
        <dbReference type="ChEBI" id="CHEBI:49883"/>
        <label>2</label>
        <note>4Fe-4S-S-AdoMet</note>
    </ligand>
</feature>
<feature type="binding site" evidence="1">
    <location>
        <position position="301"/>
    </location>
    <ligand>
        <name>[4Fe-4S] cluster</name>
        <dbReference type="ChEBI" id="CHEBI:49883"/>
        <label>1</label>
    </ligand>
</feature>
<evidence type="ECO:0000255" key="1">
    <source>
        <dbReference type="HAMAP-Rule" id="MF_00206"/>
    </source>
</evidence>
<evidence type="ECO:0000255" key="2">
    <source>
        <dbReference type="PROSITE-ProRule" id="PRU01266"/>
    </source>
</evidence>
<reference key="1">
    <citation type="journal article" date="2009" name="BMC Genomics">
        <title>Metabolic analysis of the soil microbe Dechloromonas aromatica str. RCB: indications of a surprisingly complex life-style and cryptic anaerobic pathways for aromatic degradation.</title>
        <authorList>
            <person name="Salinero K.K."/>
            <person name="Keller K."/>
            <person name="Feil W.S."/>
            <person name="Feil H."/>
            <person name="Trong S."/>
            <person name="Di Bartolo G."/>
            <person name="Lapidus A."/>
        </authorList>
    </citation>
    <scope>NUCLEOTIDE SEQUENCE [LARGE SCALE GENOMIC DNA]</scope>
    <source>
        <strain>RCB</strain>
    </source>
</reference>
<accession>Q47JD5</accession>